<protein>
    <recommendedName>
        <fullName evidence="1">Valine--tRNA ligase</fullName>
        <ecNumber evidence="1">6.1.1.9</ecNumber>
    </recommendedName>
    <alternativeName>
        <fullName evidence="1">Valyl-tRNA synthetase</fullName>
        <shortName evidence="1">ValRS</shortName>
    </alternativeName>
</protein>
<dbReference type="EC" id="6.1.1.9" evidence="1"/>
<dbReference type="EMBL" id="CP001111">
    <property type="protein sequence ID" value="ACF50238.1"/>
    <property type="molecule type" value="Genomic_DNA"/>
</dbReference>
<dbReference type="RefSeq" id="WP_012510004.1">
    <property type="nucleotide sequence ID" value="NC_011071.1"/>
</dbReference>
<dbReference type="SMR" id="B4SJ70"/>
<dbReference type="STRING" id="391008.Smal_0533"/>
<dbReference type="KEGG" id="smt:Smal_0533"/>
<dbReference type="eggNOG" id="COG0525">
    <property type="taxonomic scope" value="Bacteria"/>
</dbReference>
<dbReference type="HOGENOM" id="CLU_001493_0_2_6"/>
<dbReference type="OrthoDB" id="9810365at2"/>
<dbReference type="Proteomes" id="UP000001867">
    <property type="component" value="Chromosome"/>
</dbReference>
<dbReference type="GO" id="GO:0005829">
    <property type="term" value="C:cytosol"/>
    <property type="evidence" value="ECO:0007669"/>
    <property type="project" value="TreeGrafter"/>
</dbReference>
<dbReference type="GO" id="GO:0002161">
    <property type="term" value="F:aminoacyl-tRNA deacylase activity"/>
    <property type="evidence" value="ECO:0007669"/>
    <property type="project" value="InterPro"/>
</dbReference>
<dbReference type="GO" id="GO:0005524">
    <property type="term" value="F:ATP binding"/>
    <property type="evidence" value="ECO:0007669"/>
    <property type="project" value="UniProtKB-UniRule"/>
</dbReference>
<dbReference type="GO" id="GO:0004832">
    <property type="term" value="F:valine-tRNA ligase activity"/>
    <property type="evidence" value="ECO:0007669"/>
    <property type="project" value="UniProtKB-UniRule"/>
</dbReference>
<dbReference type="GO" id="GO:0006438">
    <property type="term" value="P:valyl-tRNA aminoacylation"/>
    <property type="evidence" value="ECO:0007669"/>
    <property type="project" value="UniProtKB-UniRule"/>
</dbReference>
<dbReference type="CDD" id="cd07962">
    <property type="entry name" value="Anticodon_Ia_Val"/>
    <property type="match status" value="1"/>
</dbReference>
<dbReference type="CDD" id="cd00817">
    <property type="entry name" value="ValRS_core"/>
    <property type="match status" value="1"/>
</dbReference>
<dbReference type="FunFam" id="3.40.50.620:FF:000032">
    <property type="entry name" value="Valine--tRNA ligase"/>
    <property type="match status" value="1"/>
</dbReference>
<dbReference type="FunFam" id="3.40.50.620:FF:000098">
    <property type="entry name" value="Valine--tRNA ligase"/>
    <property type="match status" value="1"/>
</dbReference>
<dbReference type="FunFam" id="3.90.740.10:FF:000015">
    <property type="entry name" value="Valine--tRNA ligase"/>
    <property type="match status" value="1"/>
</dbReference>
<dbReference type="Gene3D" id="3.40.50.620">
    <property type="entry name" value="HUPs"/>
    <property type="match status" value="2"/>
</dbReference>
<dbReference type="Gene3D" id="1.10.730.10">
    <property type="entry name" value="Isoleucyl-tRNA Synthetase, Domain 1"/>
    <property type="match status" value="1"/>
</dbReference>
<dbReference type="Gene3D" id="1.10.287.380">
    <property type="entry name" value="Valyl-tRNA synthetase, C-terminal domain"/>
    <property type="match status" value="1"/>
</dbReference>
<dbReference type="Gene3D" id="3.90.740.10">
    <property type="entry name" value="Valyl/Leucyl/Isoleucyl-tRNA synthetase, editing domain"/>
    <property type="match status" value="1"/>
</dbReference>
<dbReference type="HAMAP" id="MF_02004">
    <property type="entry name" value="Val_tRNA_synth_type1"/>
    <property type="match status" value="1"/>
</dbReference>
<dbReference type="InterPro" id="IPR001412">
    <property type="entry name" value="aa-tRNA-synth_I_CS"/>
</dbReference>
<dbReference type="InterPro" id="IPR002300">
    <property type="entry name" value="aa-tRNA-synth_Ia"/>
</dbReference>
<dbReference type="InterPro" id="IPR033705">
    <property type="entry name" value="Anticodon_Ia_Val"/>
</dbReference>
<dbReference type="InterPro" id="IPR013155">
    <property type="entry name" value="M/V/L/I-tRNA-synth_anticd-bd"/>
</dbReference>
<dbReference type="InterPro" id="IPR014729">
    <property type="entry name" value="Rossmann-like_a/b/a_fold"/>
</dbReference>
<dbReference type="InterPro" id="IPR010978">
    <property type="entry name" value="tRNA-bd_arm"/>
</dbReference>
<dbReference type="InterPro" id="IPR009080">
    <property type="entry name" value="tRNAsynth_Ia_anticodon-bd"/>
</dbReference>
<dbReference type="InterPro" id="IPR037118">
    <property type="entry name" value="Val-tRNA_synth_C_sf"/>
</dbReference>
<dbReference type="InterPro" id="IPR019499">
    <property type="entry name" value="Val-tRNA_synth_tRNA-bd"/>
</dbReference>
<dbReference type="InterPro" id="IPR009008">
    <property type="entry name" value="Val/Leu/Ile-tRNA-synth_edit"/>
</dbReference>
<dbReference type="InterPro" id="IPR002303">
    <property type="entry name" value="Valyl-tRNA_ligase"/>
</dbReference>
<dbReference type="NCBIfam" id="NF004349">
    <property type="entry name" value="PRK05729.1"/>
    <property type="match status" value="1"/>
</dbReference>
<dbReference type="NCBIfam" id="TIGR00422">
    <property type="entry name" value="valS"/>
    <property type="match status" value="1"/>
</dbReference>
<dbReference type="PANTHER" id="PTHR11946:SF93">
    <property type="entry name" value="VALINE--TRNA LIGASE, CHLOROPLASTIC_MITOCHONDRIAL 2"/>
    <property type="match status" value="1"/>
</dbReference>
<dbReference type="PANTHER" id="PTHR11946">
    <property type="entry name" value="VALYL-TRNA SYNTHETASES"/>
    <property type="match status" value="1"/>
</dbReference>
<dbReference type="Pfam" id="PF08264">
    <property type="entry name" value="Anticodon_1"/>
    <property type="match status" value="1"/>
</dbReference>
<dbReference type="Pfam" id="PF00133">
    <property type="entry name" value="tRNA-synt_1"/>
    <property type="match status" value="1"/>
</dbReference>
<dbReference type="Pfam" id="PF10458">
    <property type="entry name" value="Val_tRNA-synt_C"/>
    <property type="match status" value="1"/>
</dbReference>
<dbReference type="PRINTS" id="PR00986">
    <property type="entry name" value="TRNASYNTHVAL"/>
</dbReference>
<dbReference type="SUPFAM" id="SSF47323">
    <property type="entry name" value="Anticodon-binding domain of a subclass of class I aminoacyl-tRNA synthetases"/>
    <property type="match status" value="1"/>
</dbReference>
<dbReference type="SUPFAM" id="SSF52374">
    <property type="entry name" value="Nucleotidylyl transferase"/>
    <property type="match status" value="1"/>
</dbReference>
<dbReference type="SUPFAM" id="SSF46589">
    <property type="entry name" value="tRNA-binding arm"/>
    <property type="match status" value="1"/>
</dbReference>
<dbReference type="SUPFAM" id="SSF50677">
    <property type="entry name" value="ValRS/IleRS/LeuRS editing domain"/>
    <property type="match status" value="1"/>
</dbReference>
<dbReference type="PROSITE" id="PS00178">
    <property type="entry name" value="AA_TRNA_LIGASE_I"/>
    <property type="match status" value="1"/>
</dbReference>
<proteinExistence type="inferred from homology"/>
<evidence type="ECO:0000255" key="1">
    <source>
        <dbReference type="HAMAP-Rule" id="MF_02004"/>
    </source>
</evidence>
<comment type="function">
    <text evidence="1">Catalyzes the attachment of valine to tRNA(Val). As ValRS can inadvertently accommodate and process structurally similar amino acids such as threonine, to avoid such errors, it has a 'posttransfer' editing activity that hydrolyzes mischarged Thr-tRNA(Val) in a tRNA-dependent manner.</text>
</comment>
<comment type="catalytic activity">
    <reaction evidence="1">
        <text>tRNA(Val) + L-valine + ATP = L-valyl-tRNA(Val) + AMP + diphosphate</text>
        <dbReference type="Rhea" id="RHEA:10704"/>
        <dbReference type="Rhea" id="RHEA-COMP:9672"/>
        <dbReference type="Rhea" id="RHEA-COMP:9708"/>
        <dbReference type="ChEBI" id="CHEBI:30616"/>
        <dbReference type="ChEBI" id="CHEBI:33019"/>
        <dbReference type="ChEBI" id="CHEBI:57762"/>
        <dbReference type="ChEBI" id="CHEBI:78442"/>
        <dbReference type="ChEBI" id="CHEBI:78537"/>
        <dbReference type="ChEBI" id="CHEBI:456215"/>
        <dbReference type="EC" id="6.1.1.9"/>
    </reaction>
</comment>
<comment type="subunit">
    <text evidence="1">Monomer.</text>
</comment>
<comment type="subcellular location">
    <subcellularLocation>
        <location evidence="1">Cytoplasm</location>
    </subcellularLocation>
</comment>
<comment type="domain">
    <text evidence="1">ValRS has two distinct active sites: one for aminoacylation and one for editing. The misactivated threonine is translocated from the active site to the editing site.</text>
</comment>
<comment type="domain">
    <text evidence="1">The C-terminal coiled-coil domain is crucial for aminoacylation activity.</text>
</comment>
<comment type="similarity">
    <text evidence="1">Belongs to the class-I aminoacyl-tRNA synthetase family. ValS type 1 subfamily.</text>
</comment>
<gene>
    <name evidence="1" type="primary">valS</name>
    <name type="ordered locus">Smal_0533</name>
</gene>
<accession>B4SJ70</accession>
<sequence length="942" mass="106318">MTQLASSYDPKSFETDLYEAWEKAGHFKPSGTGEPYTILLPPPNVTGTLHMGHAFQQTLMDALVRYHRMRGYDTLWQVGTDHAGIATEMVVSRNLALEGKGETRDSLGREGFIGKVWEWKQQSGDIIERQMRRLGTSADWSRSTFTMDPQPSAAVNEAFVRWYEQGLIYRGQRLVNWDPVLKTAISDLEVESAEEDGFLWSIAYTLDDGLSYEHVERDADGVETLRETRDYLVVATTRPETLLGDTAVMVHPEDARYAHLIGKSVVLPLTGRRVPVIADDYVDRAFGTGVVKVTPAHDFNDYEVGVRHSLPMINLFTPVAALNENAPERFQGLDRYAARKAVLAELEDLGILVETKAHKLQVPRGDRTGQVIEPYLTDQWFVKMDDLAKRGLELVEDGSISFVPPNWINTYRHWMNNIQDWCISRQLWWGHRIPAWFDEATGSCYVGRSEEEVRAKHSLGSDVVLNQESDVLETWFSSQLWPFSTLGWPNEQAMAERGFDRYLPSSVLITGFDIIFFWVARMIMATDNLVGKIPFKDVYFTGLIRDGQGQKMSKSKGNVLDPLDIIDGISIDDLVAKRTGGLMQPKMVEKIEKATRKEFPDGIAAHGADALRFTIAALATHGRDIKFDMNRAEGYKNFCNKLWNASRFTLMNTEGAAFTGMPTPRTDAERWILSRLAAVSSEAQGHYANYRFDLLAQCLYEFAWNEFCDWFLELSKPALNGADAADAESTRHTLLYVLEALLRLLHPLTPFITEQLWQQLAPRLGLAETTLSLRPYPTAAEFEGDFAQAEADVEWLKAVISAVRRVRSELNVAPSKQVPLRLQAGLEQDRVRIERFSASLSFLLKLDSIQWLAEGESAPPAAAAIVGELKLLVPLEGLVDLDAERVRLDKEIARVEVEKEKSETKLAKFTDKVPPAVVEQERVRLVDWNTQLAGLREQRAKL</sequence>
<organism>
    <name type="scientific">Stenotrophomonas maltophilia (strain R551-3)</name>
    <dbReference type="NCBI Taxonomy" id="391008"/>
    <lineage>
        <taxon>Bacteria</taxon>
        <taxon>Pseudomonadati</taxon>
        <taxon>Pseudomonadota</taxon>
        <taxon>Gammaproteobacteria</taxon>
        <taxon>Lysobacterales</taxon>
        <taxon>Lysobacteraceae</taxon>
        <taxon>Stenotrophomonas</taxon>
        <taxon>Stenotrophomonas maltophilia group</taxon>
    </lineage>
</organism>
<feature type="chain" id="PRO_1000189245" description="Valine--tRNA ligase">
    <location>
        <begin position="1"/>
        <end position="942"/>
    </location>
</feature>
<feature type="coiled-coil region" evidence="1">
    <location>
        <begin position="876"/>
        <end position="942"/>
    </location>
</feature>
<feature type="short sequence motif" description="'HIGH' region">
    <location>
        <begin position="43"/>
        <end position="53"/>
    </location>
</feature>
<feature type="short sequence motif" description="'KMSKS' region">
    <location>
        <begin position="551"/>
        <end position="555"/>
    </location>
</feature>
<feature type="binding site" evidence="1">
    <location>
        <position position="554"/>
    </location>
    <ligand>
        <name>ATP</name>
        <dbReference type="ChEBI" id="CHEBI:30616"/>
    </ligand>
</feature>
<name>SYV_STRM5</name>
<keyword id="KW-0030">Aminoacyl-tRNA synthetase</keyword>
<keyword id="KW-0067">ATP-binding</keyword>
<keyword id="KW-0175">Coiled coil</keyword>
<keyword id="KW-0963">Cytoplasm</keyword>
<keyword id="KW-0436">Ligase</keyword>
<keyword id="KW-0547">Nucleotide-binding</keyword>
<keyword id="KW-0648">Protein biosynthesis</keyword>
<reference key="1">
    <citation type="submission" date="2008-06" db="EMBL/GenBank/DDBJ databases">
        <title>Complete sequence of Stenotrophomonas maltophilia R551-3.</title>
        <authorList>
            <consortium name="US DOE Joint Genome Institute"/>
            <person name="Lucas S."/>
            <person name="Copeland A."/>
            <person name="Lapidus A."/>
            <person name="Glavina del Rio T."/>
            <person name="Dalin E."/>
            <person name="Tice H."/>
            <person name="Pitluck S."/>
            <person name="Chain P."/>
            <person name="Malfatti S."/>
            <person name="Shin M."/>
            <person name="Vergez L."/>
            <person name="Lang D."/>
            <person name="Schmutz J."/>
            <person name="Larimer F."/>
            <person name="Land M."/>
            <person name="Hauser L."/>
            <person name="Kyrpides N."/>
            <person name="Mikhailova N."/>
            <person name="Taghavi S."/>
            <person name="Monchy S."/>
            <person name="Newman L."/>
            <person name="Vangronsveld J."/>
            <person name="van der Lelie D."/>
            <person name="Richardson P."/>
        </authorList>
    </citation>
    <scope>NUCLEOTIDE SEQUENCE [LARGE SCALE GENOMIC DNA]</scope>
    <source>
        <strain>R551-3</strain>
    </source>
</reference>